<gene>
    <name evidence="1" type="primary">dabA</name>
    <name type="ordered locus">RC1_1188</name>
</gene>
<protein>
    <recommendedName>
        <fullName evidence="1">Probable inorganic carbon transporter subunit DabA</fullName>
    </recommendedName>
</protein>
<accession>B6IMM3</accession>
<dbReference type="EMBL" id="CP000613">
    <property type="protein sequence ID" value="ACI98602.1"/>
    <property type="molecule type" value="Genomic_DNA"/>
</dbReference>
<dbReference type="STRING" id="414684.RC1_1188"/>
<dbReference type="KEGG" id="rce:RC1_1188"/>
<dbReference type="eggNOG" id="COG3002">
    <property type="taxonomic scope" value="Bacteria"/>
</dbReference>
<dbReference type="HOGENOM" id="CLU_009885_1_0_5"/>
<dbReference type="OrthoDB" id="9805101at2"/>
<dbReference type="Proteomes" id="UP000001591">
    <property type="component" value="Chromosome"/>
</dbReference>
<dbReference type="GO" id="GO:0005886">
    <property type="term" value="C:plasma membrane"/>
    <property type="evidence" value="ECO:0007669"/>
    <property type="project" value="UniProtKB-SubCell"/>
</dbReference>
<dbReference type="GO" id="GO:0008270">
    <property type="term" value="F:zinc ion binding"/>
    <property type="evidence" value="ECO:0007669"/>
    <property type="project" value="UniProtKB-UniRule"/>
</dbReference>
<dbReference type="HAMAP" id="MF_01871">
    <property type="entry name" value="DabA"/>
    <property type="match status" value="1"/>
</dbReference>
<dbReference type="InterPro" id="IPR018752">
    <property type="entry name" value="DabA"/>
</dbReference>
<dbReference type="PANTHER" id="PTHR38344:SF1">
    <property type="entry name" value="INORGANIC CARBON TRANSPORTER SUBUNIT DABA-RELATED"/>
    <property type="match status" value="1"/>
</dbReference>
<dbReference type="PANTHER" id="PTHR38344">
    <property type="entry name" value="UPF0753 PROTEIN AQ_863"/>
    <property type="match status" value="1"/>
</dbReference>
<dbReference type="Pfam" id="PF10070">
    <property type="entry name" value="DabA"/>
    <property type="match status" value="1"/>
</dbReference>
<proteinExistence type="inferred from homology"/>
<keyword id="KW-0997">Cell inner membrane</keyword>
<keyword id="KW-1003">Cell membrane</keyword>
<keyword id="KW-0472">Membrane</keyword>
<keyword id="KW-0479">Metal-binding</keyword>
<keyword id="KW-1185">Reference proteome</keyword>
<keyword id="KW-0813">Transport</keyword>
<keyword id="KW-0862">Zinc</keyword>
<feature type="chain" id="PRO_0000387294" description="Probable inorganic carbon transporter subunit DabA">
    <location>
        <begin position="1"/>
        <end position="811"/>
    </location>
</feature>
<feature type="binding site" evidence="1">
    <location>
        <position position="336"/>
    </location>
    <ligand>
        <name>Zn(2+)</name>
        <dbReference type="ChEBI" id="CHEBI:29105"/>
    </ligand>
</feature>
<feature type="binding site" evidence="1">
    <location>
        <position position="338"/>
    </location>
    <ligand>
        <name>Zn(2+)</name>
        <dbReference type="ChEBI" id="CHEBI:29105"/>
    </ligand>
</feature>
<feature type="binding site" evidence="1">
    <location>
        <position position="498"/>
    </location>
    <ligand>
        <name>Zn(2+)</name>
        <dbReference type="ChEBI" id="CHEBI:29105"/>
    </ligand>
</feature>
<feature type="binding site" evidence="1">
    <location>
        <position position="513"/>
    </location>
    <ligand>
        <name>Zn(2+)</name>
        <dbReference type="ChEBI" id="CHEBI:29105"/>
    </ligand>
</feature>
<organism>
    <name type="scientific">Rhodospirillum centenum (strain ATCC 51521 / SW)</name>
    <dbReference type="NCBI Taxonomy" id="414684"/>
    <lineage>
        <taxon>Bacteria</taxon>
        <taxon>Pseudomonadati</taxon>
        <taxon>Pseudomonadota</taxon>
        <taxon>Alphaproteobacteria</taxon>
        <taxon>Rhodospirillales</taxon>
        <taxon>Rhodospirillaceae</taxon>
        <taxon>Rhodospirillum</taxon>
    </lineage>
</organism>
<sequence>MLMTATGSPFLTAETIIVAADRAARAIPPLWPLASSVAVNPFIGQAGDTLPTAAARLRRAAGIALTMPRSWYAERLRSGEIAEGDLQAAFDAAPAELRPKTLAALKQAAHAQGTRPPALPTVAELARDLDSIDWPGIVNDRIGHWASGYFDQGQALWATAQAQRAYAAWRTVATHDLTPEIAGLAGFAQNVADAPADAEAALVRCVTRLGLSGAALESYFHRLLMTLGGWGQIARYRLWQAELTGNTDASVVDLLAIRLTWEAALLRQYGAALEPQWQAAIAAYARPVAATLEDGVDAILQEAAERAAQRRLHSLLSETPSALAAPGRPALQMAFCIDVRSEVFRRALESLDPGIRTLGFAGFFGLGIGHRRFGSDVVEARLPVLLRPGVFTCSGEATPAIDKADLTARITARAKRAWGRFKLAAISSFAFVEAAGPIYVGRLLRDGLALPRPSAPNDPAPRPADDLGFDTRLGMAANVLRAMSLTEGFARLVLLAGHGASVVNNPHASALHCGACGGYSGEVNARLLAALLNDRDVRAGLASQGIRIPDDTVFLGALHDTTTDEVTVYAADHPSVAHAGDLERARRWLTSAGVLARGERALRLPRAARSQDIPHRARDWAELRPEWALAGCQAFVAAPRERTAGRDLEGRAFLHDYDWRRDKGFGVLELILTAPVVVASWISLQYYGSVVAPDVFGAGNKLLHNVTGGIGVVEGNGGLLRSGLPWQSVHDGEQLAHEPLRLSVLIEAPREAIAGILERHPGVRTLFDNRWLHLFALDDEGHMAWRYTGDLRWENCSRDAASGRIPLRELA</sequence>
<evidence type="ECO:0000255" key="1">
    <source>
        <dbReference type="HAMAP-Rule" id="MF_01871"/>
    </source>
</evidence>
<comment type="function">
    <text evidence="1">Part of an energy-coupled inorganic carbon pump.</text>
</comment>
<comment type="cofactor">
    <cofactor evidence="1">
        <name>Zn(2+)</name>
        <dbReference type="ChEBI" id="CHEBI:29105"/>
    </cofactor>
</comment>
<comment type="subunit">
    <text evidence="1">Forms a complex with DabB.</text>
</comment>
<comment type="subcellular location">
    <subcellularLocation>
        <location evidence="1">Cell inner membrane</location>
        <topology evidence="1">Peripheral membrane protein</topology>
    </subcellularLocation>
</comment>
<comment type="similarity">
    <text evidence="1">Belongs to the inorganic carbon transporter (TC 9.A.2) DabA family.</text>
</comment>
<reference key="1">
    <citation type="submission" date="2007-03" db="EMBL/GenBank/DDBJ databases">
        <title>Genome sequence of Rhodospirillum centenum.</title>
        <authorList>
            <person name="Touchman J.W."/>
            <person name="Bauer C."/>
            <person name="Blankenship R.E."/>
        </authorList>
    </citation>
    <scope>NUCLEOTIDE SEQUENCE [LARGE SCALE GENOMIC DNA]</scope>
    <source>
        <strain>ATCC 51521 / SW</strain>
    </source>
</reference>
<name>DABA_RHOCS</name>